<comment type="subcellular location">
    <subcellularLocation>
        <location>Cytoplasm</location>
    </subcellularLocation>
    <subcellularLocation>
        <location evidence="1">Cell inner membrane</location>
        <topology evidence="1">Peripheral membrane protein</topology>
        <orientation evidence="1">Cytoplasmic side</orientation>
    </subcellularLocation>
</comment>
<comment type="similarity">
    <text evidence="1">Belongs to the HflD family.</text>
</comment>
<reference key="1">
    <citation type="journal article" date="2009" name="Genome Res.">
        <title>Newly introduced genomic prophage islands are critical determinants of in vivo competitiveness in the Liverpool epidemic strain of Pseudomonas aeruginosa.</title>
        <authorList>
            <person name="Winstanley C."/>
            <person name="Langille M.G.I."/>
            <person name="Fothergill J.L."/>
            <person name="Kukavica-Ibrulj I."/>
            <person name="Paradis-Bleau C."/>
            <person name="Sanschagrin F."/>
            <person name="Thomson N.R."/>
            <person name="Winsor G.L."/>
            <person name="Quail M.A."/>
            <person name="Lennard N."/>
            <person name="Bignell A."/>
            <person name="Clarke L."/>
            <person name="Seeger K."/>
            <person name="Saunders D."/>
            <person name="Harris D."/>
            <person name="Parkhill J."/>
            <person name="Hancock R.E.W."/>
            <person name="Brinkman F.S.L."/>
            <person name="Levesque R.C."/>
        </authorList>
    </citation>
    <scope>NUCLEOTIDE SEQUENCE [LARGE SCALE GENOMIC DNA]</scope>
    <source>
        <strain>LESB58</strain>
    </source>
</reference>
<organism>
    <name type="scientific">Pseudomonas aeruginosa (strain LESB58)</name>
    <dbReference type="NCBI Taxonomy" id="557722"/>
    <lineage>
        <taxon>Bacteria</taxon>
        <taxon>Pseudomonadati</taxon>
        <taxon>Pseudomonadota</taxon>
        <taxon>Gammaproteobacteria</taxon>
        <taxon>Pseudomonadales</taxon>
        <taxon>Pseudomonadaceae</taxon>
        <taxon>Pseudomonas</taxon>
    </lineage>
</organism>
<protein>
    <recommendedName>
        <fullName evidence="1">High frequency lysogenization protein HflD homolog</fullName>
    </recommendedName>
</protein>
<gene>
    <name evidence="1" type="primary">hflD</name>
    <name type="ordered locus">PLES_24781</name>
</gene>
<proteinExistence type="inferred from homology"/>
<feature type="chain" id="PRO_1000132295" description="High frequency lysogenization protein HflD homolog">
    <location>
        <begin position="1"/>
        <end position="206"/>
    </location>
</feature>
<sequence length="206" mass="23063">MSDPRQQLIALGAVFESAALVDKLARTGQISEAPLGCMLGSLLARNPASTLDVYGGDSLNLRDGFKALASALERKPGSLQREPLRYALAMLTLERQLDKRGDMLDLIGQRLDQVEQQVQHFGLVHENVIASFASIYQDTLSTFRQRIQVHGDMRHLQVSSNAARIRALLLAGIRSARLWRQLGGSRWQMVFSRRRLLNELYPLLRG</sequence>
<dbReference type="EMBL" id="FM209186">
    <property type="protein sequence ID" value="CAW27204.1"/>
    <property type="molecule type" value="Genomic_DNA"/>
</dbReference>
<dbReference type="RefSeq" id="WP_003090440.1">
    <property type="nucleotide sequence ID" value="NC_011770.1"/>
</dbReference>
<dbReference type="SMR" id="B7UV14"/>
<dbReference type="KEGG" id="pag:PLES_24781"/>
<dbReference type="HOGENOM" id="CLU_098920_0_0_6"/>
<dbReference type="GO" id="GO:0005737">
    <property type="term" value="C:cytoplasm"/>
    <property type="evidence" value="ECO:0007669"/>
    <property type="project" value="UniProtKB-SubCell"/>
</dbReference>
<dbReference type="GO" id="GO:0005886">
    <property type="term" value="C:plasma membrane"/>
    <property type="evidence" value="ECO:0007669"/>
    <property type="project" value="UniProtKB-SubCell"/>
</dbReference>
<dbReference type="FunFam" id="1.10.3890.10:FF:000003">
    <property type="entry name" value="High frequency lysogenization protein HflD homolog"/>
    <property type="match status" value="1"/>
</dbReference>
<dbReference type="Gene3D" id="1.10.3890.10">
    <property type="entry name" value="HflD-like"/>
    <property type="match status" value="1"/>
</dbReference>
<dbReference type="HAMAP" id="MF_00695">
    <property type="entry name" value="HflD_protein"/>
    <property type="match status" value="1"/>
</dbReference>
<dbReference type="InterPro" id="IPR007451">
    <property type="entry name" value="HflD"/>
</dbReference>
<dbReference type="InterPro" id="IPR035932">
    <property type="entry name" value="HflD-like_sf"/>
</dbReference>
<dbReference type="NCBIfam" id="NF001246">
    <property type="entry name" value="PRK00218.1-2"/>
    <property type="match status" value="1"/>
</dbReference>
<dbReference type="NCBIfam" id="NF001247">
    <property type="entry name" value="PRK00218.1-3"/>
    <property type="match status" value="1"/>
</dbReference>
<dbReference type="PANTHER" id="PTHR38100">
    <property type="entry name" value="HIGH FREQUENCY LYSOGENIZATION PROTEIN HFLD"/>
    <property type="match status" value="1"/>
</dbReference>
<dbReference type="PANTHER" id="PTHR38100:SF1">
    <property type="entry name" value="HIGH FREQUENCY LYSOGENIZATION PROTEIN HFLD"/>
    <property type="match status" value="1"/>
</dbReference>
<dbReference type="Pfam" id="PF04356">
    <property type="entry name" value="DUF489"/>
    <property type="match status" value="1"/>
</dbReference>
<dbReference type="SUPFAM" id="SSF101322">
    <property type="entry name" value="YcfC-like"/>
    <property type="match status" value="1"/>
</dbReference>
<accession>B7UV14</accession>
<name>HFLD_PSEA8</name>
<evidence type="ECO:0000255" key="1">
    <source>
        <dbReference type="HAMAP-Rule" id="MF_00695"/>
    </source>
</evidence>
<keyword id="KW-0997">Cell inner membrane</keyword>
<keyword id="KW-1003">Cell membrane</keyword>
<keyword id="KW-0963">Cytoplasm</keyword>
<keyword id="KW-0472">Membrane</keyword>